<evidence type="ECO:0000255" key="1">
    <source>
        <dbReference type="HAMAP-Rule" id="MF_01384"/>
    </source>
</evidence>
<evidence type="ECO:0000305" key="2">
    <source>
    </source>
</evidence>
<protein>
    <recommendedName>
        <fullName>Putative urease accessory protein UreD</fullName>
    </recommendedName>
</protein>
<keyword id="KW-0143">Chaperone</keyword>
<keyword id="KW-0963">Cytoplasm</keyword>
<keyword id="KW-0996">Nickel insertion</keyword>
<keyword id="KW-1185">Reference proteome</keyword>
<comment type="function">
    <text evidence="1">Required for maturation of urease via the functional incorporation of the urease nickel metallocenter.</text>
</comment>
<comment type="subunit">
    <text evidence="1">UreD, UreF and UreG form a complex that acts as a GTP-hydrolysis-dependent molecular chaperone, activating the urease apoprotein by helping to assemble the nickel containing metallocenter of UreC. The UreE protein probably delivers the nickel.</text>
</comment>
<comment type="subcellular location">
    <subcellularLocation>
        <location evidence="1">Cytoplasm</location>
    </subcellularLocation>
</comment>
<comment type="similarity">
    <text evidence="1">Belongs to the UreD family.</text>
</comment>
<comment type="caution">
    <text evidence="2">Could be the product of a pseudogene. This gene encodes a non-functional protein due to an extra G nucleotide which gives rise to a truncated protein. This reverts with a frequency of 10 -4 to 10 -5 on urea containing agar. This reversion does not effect virulence in mice in any detectable fashion, suggesting urease is not important in the virulence of Y.pestis (PubMed:11119503).</text>
</comment>
<proteinExistence type="uncertain"/>
<gene>
    <name evidence="1" type="primary">ureD</name>
    <name type="ordered locus">YPO2671</name>
    <name type="ordered locus">y1243</name>
    <name type="ordered locus">YP_2472</name>
</gene>
<sequence length="277" mass="30816">MTAQSQNIVETPSRVRAHALGVNAPELAKYQDEPAQMRSGAVGKSGYLKLRFAKREHCSILAEMERRVPSLVQKALYWDEEIPELPCVTMISTSGCILQGDRLATDVHVEAGACAHVTTQSATKVHMMNANYASQIQNFIVEEGGYLEFMPDPLIPHRNSRFITDTTISIHPTATAIYSEVLMSGRKYHHADERFGFDVYSSRVAAQNLAGKELFVEKYVLEPKVESLDAVGVMQTFDAFGNVILLTPKEHHDRILARVPAHFDIKGGDCQRRDAST</sequence>
<name>URED_YERPE</name>
<reference key="1">
    <citation type="journal article" date="2001" name="Infect. Immun.">
        <title>Silencing and reactivation of urease in Yersinia pestis is determined by one G residue at a specific position in the ureD gene.</title>
        <authorList>
            <person name="Sebbane F."/>
            <person name="Devalckenaere A."/>
            <person name="Foulon J."/>
            <person name="Carniel E."/>
            <person name="Simonet M."/>
        </authorList>
    </citation>
    <scope>NUCLEOTIDE SEQUENCE [GENOMIC DNA]</scope>
    <scope>IDENTIFICATION AS A PSEUDOGENE</scope>
    <scope>REVERSION FREQUENCY</scope>
    <scope>LACK OF ROLE IN VIRULENCE</scope>
    <source>
        <strain>6/69M</strain>
    </source>
</reference>
<reference key="2">
    <citation type="journal article" date="2001" name="Nature">
        <title>Genome sequence of Yersinia pestis, the causative agent of plague.</title>
        <authorList>
            <person name="Parkhill J."/>
            <person name="Wren B.W."/>
            <person name="Thomson N.R."/>
            <person name="Titball R.W."/>
            <person name="Holden M.T.G."/>
            <person name="Prentice M.B."/>
            <person name="Sebaihia M."/>
            <person name="James K.D."/>
            <person name="Churcher C.M."/>
            <person name="Mungall K.L."/>
            <person name="Baker S."/>
            <person name="Basham D."/>
            <person name="Bentley S.D."/>
            <person name="Brooks K."/>
            <person name="Cerdeno-Tarraga A.-M."/>
            <person name="Chillingworth T."/>
            <person name="Cronin A."/>
            <person name="Davies R.M."/>
            <person name="Davis P."/>
            <person name="Dougan G."/>
            <person name="Feltwell T."/>
            <person name="Hamlin N."/>
            <person name="Holroyd S."/>
            <person name="Jagels K."/>
            <person name="Karlyshev A.V."/>
            <person name="Leather S."/>
            <person name="Moule S."/>
            <person name="Oyston P.C.F."/>
            <person name="Quail M.A."/>
            <person name="Rutherford K.M."/>
            <person name="Simmonds M."/>
            <person name="Skelton J."/>
            <person name="Stevens K."/>
            <person name="Whitehead S."/>
            <person name="Barrell B.G."/>
        </authorList>
    </citation>
    <scope>NUCLEOTIDE SEQUENCE [LARGE SCALE GENOMIC DNA]</scope>
    <source>
        <strain>CO-92 / Biovar Orientalis</strain>
    </source>
</reference>
<reference key="3">
    <citation type="journal article" date="2002" name="J. Bacteriol.">
        <title>Genome sequence of Yersinia pestis KIM.</title>
        <authorList>
            <person name="Deng W."/>
            <person name="Burland V."/>
            <person name="Plunkett G. III"/>
            <person name="Boutin A."/>
            <person name="Mayhew G.F."/>
            <person name="Liss P."/>
            <person name="Perna N.T."/>
            <person name="Rose D.J."/>
            <person name="Mau B."/>
            <person name="Zhou S."/>
            <person name="Schwartz D.C."/>
            <person name="Fetherston J.D."/>
            <person name="Lindler L.E."/>
            <person name="Brubaker R.R."/>
            <person name="Plano G.V."/>
            <person name="Straley S.C."/>
            <person name="McDonough K.A."/>
            <person name="Nilles M.L."/>
            <person name="Matson J.S."/>
            <person name="Blattner F.R."/>
            <person name="Perry R.D."/>
        </authorList>
    </citation>
    <scope>NUCLEOTIDE SEQUENCE [LARGE SCALE GENOMIC DNA]</scope>
    <source>
        <strain>KIM10+ / Biovar Mediaevalis</strain>
    </source>
</reference>
<reference key="4">
    <citation type="journal article" date="2004" name="DNA Res.">
        <title>Complete genome sequence of Yersinia pestis strain 91001, an isolate avirulent to humans.</title>
        <authorList>
            <person name="Song Y."/>
            <person name="Tong Z."/>
            <person name="Wang J."/>
            <person name="Wang L."/>
            <person name="Guo Z."/>
            <person name="Han Y."/>
            <person name="Zhang J."/>
            <person name="Pei D."/>
            <person name="Zhou D."/>
            <person name="Qin H."/>
            <person name="Pang X."/>
            <person name="Han Y."/>
            <person name="Zhai J."/>
            <person name="Li M."/>
            <person name="Cui B."/>
            <person name="Qi Z."/>
            <person name="Jin L."/>
            <person name="Dai R."/>
            <person name="Chen F."/>
            <person name="Li S."/>
            <person name="Ye C."/>
            <person name="Du Z."/>
            <person name="Lin W."/>
            <person name="Wang J."/>
            <person name="Yu J."/>
            <person name="Yang H."/>
            <person name="Wang J."/>
            <person name="Huang P."/>
            <person name="Yang R."/>
        </authorList>
    </citation>
    <scope>NUCLEOTIDE SEQUENCE [LARGE SCALE GENOMIC DNA]</scope>
    <source>
        <strain>91001 / Biovar Mediaevalis</strain>
    </source>
</reference>
<dbReference type="EMBL" id="AF095636">
    <property type="protein sequence ID" value="AAC78638.1"/>
    <property type="molecule type" value="Genomic_DNA"/>
</dbReference>
<dbReference type="EMBL" id="AL590842">
    <property type="status" value="NOT_ANNOTATED_CDS"/>
    <property type="molecule type" value="Genomic_DNA"/>
</dbReference>
<dbReference type="EMBL" id="AE009952">
    <property type="status" value="NOT_ANNOTATED_CDS"/>
    <property type="molecule type" value="Genomic_DNA"/>
</dbReference>
<dbReference type="EMBL" id="AE017042">
    <property type="status" value="NOT_ANNOTATED_CDS"/>
    <property type="molecule type" value="Genomic_DNA"/>
</dbReference>
<dbReference type="RefSeq" id="WP_002228375.1">
    <property type="nucleotide sequence ID" value="NZ_WUCM01000006.1"/>
</dbReference>
<dbReference type="SMR" id="Q9ZFR5"/>
<dbReference type="OMA" id="PFKLMAP"/>
<dbReference type="Proteomes" id="UP000000815">
    <property type="component" value="Chromosome"/>
</dbReference>
<dbReference type="Proteomes" id="UP000001019">
    <property type="component" value="Chromosome"/>
</dbReference>
<dbReference type="Proteomes" id="UP000002490">
    <property type="component" value="Chromosome"/>
</dbReference>
<dbReference type="GO" id="GO:0005737">
    <property type="term" value="C:cytoplasm"/>
    <property type="evidence" value="ECO:0007669"/>
    <property type="project" value="UniProtKB-SubCell"/>
</dbReference>
<dbReference type="GO" id="GO:0016151">
    <property type="term" value="F:nickel cation binding"/>
    <property type="evidence" value="ECO:0007669"/>
    <property type="project" value="UniProtKB-UniRule"/>
</dbReference>
<dbReference type="HAMAP" id="MF_01384">
    <property type="entry name" value="UreD"/>
    <property type="match status" value="1"/>
</dbReference>
<dbReference type="InterPro" id="IPR002669">
    <property type="entry name" value="UreD"/>
</dbReference>
<dbReference type="PANTHER" id="PTHR33643">
    <property type="entry name" value="UREASE ACCESSORY PROTEIN D"/>
    <property type="match status" value="1"/>
</dbReference>
<dbReference type="PANTHER" id="PTHR33643:SF1">
    <property type="entry name" value="UREASE ACCESSORY PROTEIN D"/>
    <property type="match status" value="1"/>
</dbReference>
<dbReference type="Pfam" id="PF01774">
    <property type="entry name" value="UreD"/>
    <property type="match status" value="1"/>
</dbReference>
<organism>
    <name type="scientific">Yersinia pestis</name>
    <dbReference type="NCBI Taxonomy" id="632"/>
    <lineage>
        <taxon>Bacteria</taxon>
        <taxon>Pseudomonadati</taxon>
        <taxon>Pseudomonadota</taxon>
        <taxon>Gammaproteobacteria</taxon>
        <taxon>Enterobacterales</taxon>
        <taxon>Yersiniaceae</taxon>
        <taxon>Yersinia</taxon>
    </lineage>
</organism>
<accession>Q9ZFR5</accession>
<feature type="chain" id="PRO_0000067621" description="Putative urease accessory protein UreD">
    <location>
        <begin position="1"/>
        <end position="277"/>
    </location>
</feature>